<gene>
    <name evidence="10" type="primary">Pou4f3</name>
    <name evidence="8" type="synonym">Brn-3.1</name>
    <name evidence="10" type="synonym">Brn-3c</name>
    <name evidence="10" type="synonym">Brn3c</name>
</gene>
<organism>
    <name type="scientific">Mus musculus</name>
    <name type="common">Mouse</name>
    <dbReference type="NCBI Taxonomy" id="10090"/>
    <lineage>
        <taxon>Eukaryota</taxon>
        <taxon>Metazoa</taxon>
        <taxon>Chordata</taxon>
        <taxon>Craniata</taxon>
        <taxon>Vertebrata</taxon>
        <taxon>Euteleostomi</taxon>
        <taxon>Mammalia</taxon>
        <taxon>Eutheria</taxon>
        <taxon>Euarchontoglires</taxon>
        <taxon>Glires</taxon>
        <taxon>Rodentia</taxon>
        <taxon>Myomorpha</taxon>
        <taxon>Muroidea</taxon>
        <taxon>Muridae</taxon>
        <taxon>Murinae</taxon>
        <taxon>Mus</taxon>
        <taxon>Mus</taxon>
    </lineage>
</organism>
<comment type="function">
    <text evidence="5 6 7">Acts as a transcriptional activator (PubMed:7935408, PubMed:8290353). Acts by binding to sequences related to the consensus octamer motif 5'-ATGCAAAT-3' in the regulatory regions of its target genes (PubMed:7935408). Involved in the auditory system development, required for terminal differentiation of hair cells in the inner ear (PubMed:8637595).</text>
</comment>
<comment type="subunit">
    <text>Interacts with ISL1 (PubMed:24643061).</text>
</comment>
<comment type="subcellular location">
    <subcellularLocation>
        <location evidence="1">Nucleus</location>
    </subcellularLocation>
    <subcellularLocation>
        <location evidence="1">Cytoplasm</location>
    </subcellularLocation>
    <text evidence="1">Preferentially localized in the nucleus.</text>
</comment>
<comment type="tissue specificity">
    <text>Brain.</text>
</comment>
<comment type="developmental stage">
    <text evidence="4 6">Expressed in developing spinal cord from 13 dpc to postanal day 1, not expressed in adults (PubMed:8290353). Expressed by few neurons of dorsal root ganglion from, at least, 10.5 dpc to 15.5 dpc (PubMed:22326227).</text>
</comment>
<comment type="disruption phenotype">
    <text evidence="7">Mutants are deaf and show deficits in balance and coordination that become severe at about P14 and exhibit hyperactivity by 5-6 weeks.</text>
</comment>
<comment type="similarity">
    <text evidence="9">Belongs to the POU transcription factor family. Class-4 subfamily.</text>
</comment>
<proteinExistence type="evidence at protein level"/>
<sequence length="338" mass="37016">MMAMNAKQPFGMHPVLQEPKFSSLHSGSEAMRRVCLPAPQLQGNIFGSFDESLLARAEALAAVDIVSHGKNHPFKPDATYHTMSSVPCTSTSPTVPISHPAALTSHPHHAVHQGLEGDLLEHISPTLSVSGLGAPEHSVMPAQIHPHHLGAMGHLHQAMGMSHPHAVAPHSAMPACLSDVESDPRELEAFAERFKQRRIKLGVTQADVGAALANLKIPGVGSLSQSTICRFESLTLSHNNMIALKPVLQAWLEEAEAAYREKNSKPELFNGSERKRKRTSIAAPEKRSLEAYFAIQPRPSSEKIAAIAEKLDLKKNVVRVWFCNQRQKQKRMKYSAVH</sequence>
<name>PO4F3_MOUSE</name>
<accession>Q63955</accession>
<accession>A6H6N6</accession>
<protein>
    <recommendedName>
        <fullName evidence="10">POU domain, class 4, transcription factor 3</fullName>
    </recommendedName>
    <alternativeName>
        <fullName>Brain-specific homeobox/POU domain protein 3C</fullName>
        <shortName>Brain-3C</shortName>
        <shortName>Brn-3C</shortName>
    </alternativeName>
    <alternativeName>
        <fullName evidence="8">Brn-3.1</fullName>
    </alternativeName>
</protein>
<feature type="chain" id="PRO_0000100743" description="POU domain, class 4, transcription factor 3">
    <location>
        <begin position="1"/>
        <end position="338"/>
    </location>
</feature>
<feature type="domain" description="POU-specific" evidence="3">
    <location>
        <begin position="179"/>
        <end position="256"/>
    </location>
</feature>
<feature type="DNA-binding region" description="Homeobox" evidence="2">
    <location>
        <begin position="274"/>
        <end position="333"/>
    </location>
</feature>
<feature type="short sequence motif" description="POU-IV box">
    <location>
        <begin position="56"/>
        <end position="65"/>
    </location>
</feature>
<feature type="sequence conflict" description="In Ref. 1; AAB30579." evidence="9" ref="1">
    <original>QP</original>
    <variation>HR</variation>
    <location>
        <begin position="8"/>
        <end position="9"/>
    </location>
</feature>
<feature type="sequence conflict" description="In Ref. 2; no nucleotide entry." evidence="9" ref="2">
    <original>A</original>
    <variation>E</variation>
    <location>
        <position position="55"/>
    </location>
</feature>
<feature type="sequence conflict" description="In Ref. 2; no nucleotide entry." evidence="9" ref="2">
    <original>A</original>
    <variation>P</variation>
    <location>
        <position position="158"/>
    </location>
</feature>
<feature type="sequence conflict" description="In Ref. 2; no nucleotide entry." evidence="9" ref="2">
    <original>A</original>
    <variation>S</variation>
    <location>
        <position position="210"/>
    </location>
</feature>
<feature type="sequence conflict" description="In Ref. 1; AAB30579." evidence="9" ref="1">
    <original>H</original>
    <variation>D</variation>
    <location>
        <position position="338"/>
    </location>
</feature>
<evidence type="ECO:0000250" key="1">
    <source>
        <dbReference type="UniProtKB" id="Q15319"/>
    </source>
</evidence>
<evidence type="ECO:0000255" key="2">
    <source>
        <dbReference type="PROSITE-ProRule" id="PRU00108"/>
    </source>
</evidence>
<evidence type="ECO:0000255" key="3">
    <source>
        <dbReference type="PROSITE-ProRule" id="PRU00530"/>
    </source>
</evidence>
<evidence type="ECO:0000269" key="4">
    <source>
    </source>
</evidence>
<evidence type="ECO:0000269" key="5">
    <source>
    </source>
</evidence>
<evidence type="ECO:0000269" key="6">
    <source>
    </source>
</evidence>
<evidence type="ECO:0000269" key="7">
    <source>
    </source>
</evidence>
<evidence type="ECO:0000303" key="8">
    <source>
    </source>
</evidence>
<evidence type="ECO:0000305" key="9"/>
<evidence type="ECO:0000312" key="10">
    <source>
        <dbReference type="MGI" id="MGI:102523"/>
    </source>
</evidence>
<dbReference type="EMBL" id="S69352">
    <property type="protein sequence ID" value="AAB30579.1"/>
    <property type="molecule type" value="Genomic_DNA"/>
</dbReference>
<dbReference type="EMBL" id="CH466528">
    <property type="protein sequence ID" value="EDL10035.1"/>
    <property type="molecule type" value="Genomic_DNA"/>
</dbReference>
<dbReference type="EMBL" id="BC145941">
    <property type="protein sequence ID" value="AAI45942.1"/>
    <property type="molecule type" value="mRNA"/>
</dbReference>
<dbReference type="CCDS" id="CCDS29212.1"/>
<dbReference type="PIR" id="B49642">
    <property type="entry name" value="B49642"/>
</dbReference>
<dbReference type="RefSeq" id="NP_620395.2">
    <property type="nucleotide sequence ID" value="NM_138945.2"/>
</dbReference>
<dbReference type="SMR" id="Q63955"/>
<dbReference type="FunCoup" id="Q63955">
    <property type="interactions" value="1008"/>
</dbReference>
<dbReference type="STRING" id="10090.ENSMUSP00000025374"/>
<dbReference type="PhosphoSitePlus" id="Q63955"/>
<dbReference type="PaxDb" id="10090-ENSMUSP00000025374"/>
<dbReference type="Antibodypedia" id="15803">
    <property type="antibodies" value="290 antibodies from 30 providers"/>
</dbReference>
<dbReference type="DNASU" id="18998"/>
<dbReference type="Ensembl" id="ENSMUST00000025374.4">
    <property type="protein sequence ID" value="ENSMUSP00000025374.4"/>
    <property type="gene ID" value="ENSMUSG00000024497.5"/>
</dbReference>
<dbReference type="GeneID" id="18998"/>
<dbReference type="KEGG" id="mmu:18998"/>
<dbReference type="UCSC" id="uc008etv.2">
    <property type="organism name" value="mouse"/>
</dbReference>
<dbReference type="AGR" id="MGI:102523"/>
<dbReference type="CTD" id="5459"/>
<dbReference type="MGI" id="MGI:102523">
    <property type="gene designation" value="Pou4f3"/>
</dbReference>
<dbReference type="VEuPathDB" id="HostDB:ENSMUSG00000024497"/>
<dbReference type="eggNOG" id="KOG1168">
    <property type="taxonomic scope" value="Eukaryota"/>
</dbReference>
<dbReference type="GeneTree" id="ENSGT00940000160880"/>
<dbReference type="HOGENOM" id="CLU_013065_0_0_1"/>
<dbReference type="InParanoid" id="Q63955"/>
<dbReference type="OMA" id="GMNAKQP"/>
<dbReference type="OrthoDB" id="6358449at2759"/>
<dbReference type="PhylomeDB" id="Q63955"/>
<dbReference type="TreeFam" id="TF316413"/>
<dbReference type="BioGRID-ORCS" id="18998">
    <property type="hits" value="1 hit in 78 CRISPR screens"/>
</dbReference>
<dbReference type="PRO" id="PR:Q63955"/>
<dbReference type="Proteomes" id="UP000000589">
    <property type="component" value="Chromosome 18"/>
</dbReference>
<dbReference type="RNAct" id="Q63955">
    <property type="molecule type" value="protein"/>
</dbReference>
<dbReference type="Bgee" id="ENSMUSG00000024497">
    <property type="expression patterns" value="Expressed in lumbar dorsal root ganglion and 27 other cell types or tissues"/>
</dbReference>
<dbReference type="ExpressionAtlas" id="Q63955">
    <property type="expression patterns" value="baseline and differential"/>
</dbReference>
<dbReference type="GO" id="GO:0005737">
    <property type="term" value="C:cytoplasm"/>
    <property type="evidence" value="ECO:0000250"/>
    <property type="project" value="UniProtKB"/>
</dbReference>
<dbReference type="GO" id="GO:0005654">
    <property type="term" value="C:nucleoplasm"/>
    <property type="evidence" value="ECO:0007669"/>
    <property type="project" value="Ensembl"/>
</dbReference>
<dbReference type="GO" id="GO:0005634">
    <property type="term" value="C:nucleus"/>
    <property type="evidence" value="ECO:0000314"/>
    <property type="project" value="UniProtKB"/>
</dbReference>
<dbReference type="GO" id="GO:0005667">
    <property type="term" value="C:transcription regulator complex"/>
    <property type="evidence" value="ECO:0000305"/>
    <property type="project" value="MGI"/>
</dbReference>
<dbReference type="GO" id="GO:0001228">
    <property type="term" value="F:DNA-binding transcription activator activity, RNA polymerase II-specific"/>
    <property type="evidence" value="ECO:0007669"/>
    <property type="project" value="Ensembl"/>
</dbReference>
<dbReference type="GO" id="GO:0003700">
    <property type="term" value="F:DNA-binding transcription factor activity"/>
    <property type="evidence" value="ECO:0000314"/>
    <property type="project" value="MGI"/>
</dbReference>
<dbReference type="GO" id="GO:0000978">
    <property type="term" value="F:RNA polymerase II cis-regulatory region sequence-specific DNA binding"/>
    <property type="evidence" value="ECO:0007669"/>
    <property type="project" value="Ensembl"/>
</dbReference>
<dbReference type="GO" id="GO:0043565">
    <property type="term" value="F:sequence-specific DNA binding"/>
    <property type="evidence" value="ECO:0000314"/>
    <property type="project" value="UniProtKB"/>
</dbReference>
<dbReference type="GO" id="GO:0048675">
    <property type="term" value="P:axon extension"/>
    <property type="evidence" value="ECO:0000316"/>
    <property type="project" value="MGI"/>
</dbReference>
<dbReference type="GO" id="GO:0042491">
    <property type="term" value="P:inner ear auditory receptor cell differentiation"/>
    <property type="evidence" value="ECO:0000315"/>
    <property type="project" value="MGI"/>
</dbReference>
<dbReference type="GO" id="GO:0048839">
    <property type="term" value="P:inner ear development"/>
    <property type="evidence" value="ECO:0000315"/>
    <property type="project" value="MGI"/>
</dbReference>
<dbReference type="GO" id="GO:0042472">
    <property type="term" value="P:inner ear morphogenesis"/>
    <property type="evidence" value="ECO:0000315"/>
    <property type="project" value="MGI"/>
</dbReference>
<dbReference type="GO" id="GO:0060113">
    <property type="term" value="P:inner ear receptor cell differentiation"/>
    <property type="evidence" value="ECO:0000315"/>
    <property type="project" value="MGI"/>
</dbReference>
<dbReference type="GO" id="GO:0050885">
    <property type="term" value="P:neuromuscular process controlling balance"/>
    <property type="evidence" value="ECO:0000315"/>
    <property type="project" value="MGI"/>
</dbReference>
<dbReference type="GO" id="GO:0051402">
    <property type="term" value="P:neuron apoptotic process"/>
    <property type="evidence" value="ECO:0000315"/>
    <property type="project" value="MGI"/>
</dbReference>
<dbReference type="GO" id="GO:0045944">
    <property type="term" value="P:positive regulation of transcription by RNA polymerase II"/>
    <property type="evidence" value="ECO:0000315"/>
    <property type="project" value="UniProtKB"/>
</dbReference>
<dbReference type="GO" id="GO:0006357">
    <property type="term" value="P:regulation of transcription by RNA polymerase II"/>
    <property type="evidence" value="ECO:0000314"/>
    <property type="project" value="MGI"/>
</dbReference>
<dbReference type="GO" id="GO:0031290">
    <property type="term" value="P:retinal ganglion cell axon guidance"/>
    <property type="evidence" value="ECO:0000316"/>
    <property type="project" value="MGI"/>
</dbReference>
<dbReference type="GO" id="GO:0007605">
    <property type="term" value="P:sensory perception of sound"/>
    <property type="evidence" value="ECO:0000315"/>
    <property type="project" value="MGI"/>
</dbReference>
<dbReference type="GO" id="GO:0021562">
    <property type="term" value="P:vestibulocochlear nerve development"/>
    <property type="evidence" value="ECO:0000315"/>
    <property type="project" value="MGI"/>
</dbReference>
<dbReference type="CDD" id="cd00086">
    <property type="entry name" value="homeodomain"/>
    <property type="match status" value="1"/>
</dbReference>
<dbReference type="FunFam" id="1.10.10.60:FF:000056">
    <property type="entry name" value="POU domain protein"/>
    <property type="match status" value="1"/>
</dbReference>
<dbReference type="FunFam" id="1.10.260.40:FF:000007">
    <property type="entry name" value="POU domain protein"/>
    <property type="match status" value="1"/>
</dbReference>
<dbReference type="Gene3D" id="1.10.10.60">
    <property type="entry name" value="Homeodomain-like"/>
    <property type="match status" value="1"/>
</dbReference>
<dbReference type="Gene3D" id="1.10.260.40">
    <property type="entry name" value="lambda repressor-like DNA-binding domains"/>
    <property type="match status" value="1"/>
</dbReference>
<dbReference type="InterPro" id="IPR001356">
    <property type="entry name" value="HD"/>
</dbReference>
<dbReference type="InterPro" id="IPR017970">
    <property type="entry name" value="Homeobox_CS"/>
</dbReference>
<dbReference type="InterPro" id="IPR009057">
    <property type="entry name" value="Homeodomain-like_sf"/>
</dbReference>
<dbReference type="InterPro" id="IPR010982">
    <property type="entry name" value="Lambda_DNA-bd_dom_sf"/>
</dbReference>
<dbReference type="InterPro" id="IPR013847">
    <property type="entry name" value="POU"/>
</dbReference>
<dbReference type="InterPro" id="IPR000327">
    <property type="entry name" value="POU_dom"/>
</dbReference>
<dbReference type="InterPro" id="IPR050255">
    <property type="entry name" value="POU_domain_TF"/>
</dbReference>
<dbReference type="PANTHER" id="PTHR11636">
    <property type="entry name" value="POU DOMAIN"/>
    <property type="match status" value="1"/>
</dbReference>
<dbReference type="PANTHER" id="PTHR11636:SF43">
    <property type="entry name" value="POU DOMAIN, CLASS 4, TRANSCRIPTION FACTOR 3"/>
    <property type="match status" value="1"/>
</dbReference>
<dbReference type="Pfam" id="PF00046">
    <property type="entry name" value="Homeodomain"/>
    <property type="match status" value="1"/>
</dbReference>
<dbReference type="Pfam" id="PF00157">
    <property type="entry name" value="Pou"/>
    <property type="match status" value="1"/>
</dbReference>
<dbReference type="PRINTS" id="PR00028">
    <property type="entry name" value="POUDOMAIN"/>
</dbReference>
<dbReference type="SMART" id="SM00389">
    <property type="entry name" value="HOX"/>
    <property type="match status" value="1"/>
</dbReference>
<dbReference type="SMART" id="SM00352">
    <property type="entry name" value="POU"/>
    <property type="match status" value="1"/>
</dbReference>
<dbReference type="SUPFAM" id="SSF46689">
    <property type="entry name" value="Homeodomain-like"/>
    <property type="match status" value="1"/>
</dbReference>
<dbReference type="SUPFAM" id="SSF47413">
    <property type="entry name" value="lambda repressor-like DNA-binding domains"/>
    <property type="match status" value="1"/>
</dbReference>
<dbReference type="PROSITE" id="PS00027">
    <property type="entry name" value="HOMEOBOX_1"/>
    <property type="match status" value="1"/>
</dbReference>
<dbReference type="PROSITE" id="PS50071">
    <property type="entry name" value="HOMEOBOX_2"/>
    <property type="match status" value="1"/>
</dbReference>
<dbReference type="PROSITE" id="PS00035">
    <property type="entry name" value="POU_1"/>
    <property type="match status" value="1"/>
</dbReference>
<dbReference type="PROSITE" id="PS00465">
    <property type="entry name" value="POU_2"/>
    <property type="match status" value="1"/>
</dbReference>
<dbReference type="PROSITE" id="PS51179">
    <property type="entry name" value="POU_3"/>
    <property type="match status" value="1"/>
</dbReference>
<keyword id="KW-0010">Activator</keyword>
<keyword id="KW-0963">Cytoplasm</keyword>
<keyword id="KW-0221">Differentiation</keyword>
<keyword id="KW-0238">DNA-binding</keyword>
<keyword id="KW-0371">Homeobox</keyword>
<keyword id="KW-0539">Nucleus</keyword>
<keyword id="KW-1185">Reference proteome</keyword>
<keyword id="KW-0804">Transcription</keyword>
<keyword id="KW-0805">Transcription regulation</keyword>
<reference key="1">
    <citation type="journal article" date="1994" name="Cytogenet. Cell Genet.">
        <title>Chromosomal localization and sequences of the murine Brn-3 family of developmental control genes.</title>
        <authorList>
            <person name="Theil T."/>
            <person name="Zechner U."/>
            <person name="Klett C."/>
            <person name="Adolph S."/>
            <person name="Moeroey T."/>
        </authorList>
    </citation>
    <scope>NUCLEOTIDE SEQUENCE [GENOMIC DNA]</scope>
    <source>
        <strain>CD</strain>
    </source>
</reference>
<reference key="2">
    <citation type="journal article" date="1993" name="Proc. Natl. Acad. Sci. U.S.A.">
        <title>Brn-3.0: a POU-domain protein expressed in the sensory, immune, and endocrine systems that functions on elements distinct from known octamer motifs.</title>
        <authorList>
            <person name="Gerrero M.R."/>
            <person name="McEvilly R.J."/>
            <person name="Turner E."/>
            <person name="Lin C.R."/>
            <person name="O'Connell S."/>
            <person name="Jenne K.J."/>
            <person name="Hobbs M.V."/>
            <person name="Rosenfeld M.G."/>
        </authorList>
    </citation>
    <scope>NUCLEOTIDE SEQUENCE [GENOMIC DNA]</scope>
    <source>
        <tissue>Brain</tissue>
    </source>
</reference>
<reference key="3">
    <citation type="submission" date="2005-07" db="EMBL/GenBank/DDBJ databases">
        <authorList>
            <person name="Mural R.J."/>
            <person name="Adams M.D."/>
            <person name="Myers E.W."/>
            <person name="Smith H.O."/>
            <person name="Venter J.C."/>
        </authorList>
    </citation>
    <scope>NUCLEOTIDE SEQUENCE [LARGE SCALE GENOMIC DNA]</scope>
</reference>
<reference key="4">
    <citation type="journal article" date="2004" name="Genome Res.">
        <title>The status, quality, and expansion of the NIH full-length cDNA project: the Mammalian Gene Collection (MGC).</title>
        <authorList>
            <consortium name="The MGC Project Team"/>
        </authorList>
    </citation>
    <scope>NUCLEOTIDE SEQUENCE [LARGE SCALE MRNA]</scope>
    <source>
        <tissue>Brain</tissue>
    </source>
</reference>
<reference key="5">
    <citation type="journal article" date="1993" name="Nucleic Acids Res.">
        <title>Mouse Brn-3 family of POU transcription factors: a new aminoterminal domain is crucial for the oncogenic activity of Brn-3a.</title>
        <authorList>
            <person name="Theil T."/>
            <person name="McLean-Hunter S."/>
            <person name="Zoernig M."/>
            <person name="Moeroey T."/>
        </authorList>
    </citation>
    <scope>FUNCTION</scope>
    <scope>DNA-BINDING</scope>
    <scope>DEVELOPMENTAL STAGE</scope>
</reference>
<reference key="6">
    <citation type="journal article" date="1994" name="Mol. Cell. Biol.">
        <title>The opposite and antagonistic effects of the closely related POU family transcription factors Brn-3a and Brn-3b on the activity of a target promoter are dependent on differences in the POU domain.</title>
        <authorList>
            <person name="Morris P.J."/>
            <person name="Theil T."/>
            <person name="Ring C.J."/>
            <person name="Lillycrop K.A."/>
            <person name="Moroy T."/>
            <person name="Latchman D.S."/>
        </authorList>
    </citation>
    <scope>FUNCTION</scope>
    <scope>DNA-BINDING</scope>
</reference>
<reference key="7">
    <citation type="journal article" date="1996" name="Nature">
        <title>Role of transcription factors Brn-3.1 and Brn-3.2 in auditory and visual system development.</title>
        <authorList>
            <person name="Erkman L."/>
            <person name="McEvilly R.J."/>
            <person name="Luo L."/>
            <person name="Ryan A.K."/>
            <person name="Hooshmand F."/>
            <person name="O'Connell S.M."/>
            <person name="Keithley E.M."/>
            <person name="Rapaport D.H."/>
            <person name="Ryan A.F."/>
            <person name="Rosenfeld M.G."/>
        </authorList>
    </citation>
    <scope>FUNCTION</scope>
    <scope>DISRUPTION PHENOTYPE</scope>
</reference>
<reference key="8">
    <citation type="journal article" date="2012" name="Dev. Biol.">
        <title>Brn3a/Pou4f1 regulates dorsal root ganglion sensory neuron specification and axonal projection into the spinal cord.</title>
        <authorList>
            <person name="Zou M."/>
            <person name="Li S."/>
            <person name="Klein W.H."/>
            <person name="Xiang M."/>
        </authorList>
    </citation>
    <scope>DEVELOPMENTAL STAGE</scope>
</reference>
<reference key="9">
    <citation type="journal article" date="2014" name="PLoS ONE">
        <title>Isl1 and Pou4f2 form a complex to regulate target genes in developing retinal ganglion cells.</title>
        <authorList>
            <person name="Li R."/>
            <person name="Wu F."/>
            <person name="Ruonala R."/>
            <person name="Sapkota D."/>
            <person name="Hu Z."/>
            <person name="Mu X."/>
        </authorList>
    </citation>
    <scope>INTERACTION WITH ISL1</scope>
</reference>